<protein>
    <recommendedName>
        <fullName evidence="1">Aminomethyltransferase</fullName>
        <ecNumber evidence="1">2.1.2.10</ecNumber>
    </recommendedName>
    <alternativeName>
        <fullName evidence="1">Glycine cleavage system T protein</fullName>
    </alternativeName>
</protein>
<comment type="function">
    <text evidence="1">The glycine cleavage system catalyzes the degradation of glycine.</text>
</comment>
<comment type="catalytic activity">
    <reaction evidence="1">
        <text>N(6)-[(R)-S(8)-aminomethyldihydrolipoyl]-L-lysyl-[protein] + (6S)-5,6,7,8-tetrahydrofolate = N(6)-[(R)-dihydrolipoyl]-L-lysyl-[protein] + (6R)-5,10-methylene-5,6,7,8-tetrahydrofolate + NH4(+)</text>
        <dbReference type="Rhea" id="RHEA:16945"/>
        <dbReference type="Rhea" id="RHEA-COMP:10475"/>
        <dbReference type="Rhea" id="RHEA-COMP:10492"/>
        <dbReference type="ChEBI" id="CHEBI:15636"/>
        <dbReference type="ChEBI" id="CHEBI:28938"/>
        <dbReference type="ChEBI" id="CHEBI:57453"/>
        <dbReference type="ChEBI" id="CHEBI:83100"/>
        <dbReference type="ChEBI" id="CHEBI:83143"/>
        <dbReference type="EC" id="2.1.2.10"/>
    </reaction>
</comment>
<comment type="subunit">
    <text evidence="1">The glycine cleavage system is composed of four proteins: P, T, L and H.</text>
</comment>
<comment type="similarity">
    <text evidence="1">Belongs to the GcvT family.</text>
</comment>
<organism>
    <name type="scientific">Xylella fastidiosa (strain M23)</name>
    <dbReference type="NCBI Taxonomy" id="405441"/>
    <lineage>
        <taxon>Bacteria</taxon>
        <taxon>Pseudomonadati</taxon>
        <taxon>Pseudomonadota</taxon>
        <taxon>Gammaproteobacteria</taxon>
        <taxon>Lysobacterales</taxon>
        <taxon>Lysobacteraceae</taxon>
        <taxon>Xylella</taxon>
    </lineage>
</organism>
<evidence type="ECO:0000255" key="1">
    <source>
        <dbReference type="HAMAP-Rule" id="MF_00259"/>
    </source>
</evidence>
<accession>B2I6Q1</accession>
<dbReference type="EC" id="2.1.2.10" evidence="1"/>
<dbReference type="EMBL" id="CP001011">
    <property type="protein sequence ID" value="ACB91593.1"/>
    <property type="molecule type" value="Genomic_DNA"/>
</dbReference>
<dbReference type="RefSeq" id="WP_004087174.1">
    <property type="nucleotide sequence ID" value="NC_010577.1"/>
</dbReference>
<dbReference type="SMR" id="B2I6Q1"/>
<dbReference type="GeneID" id="93903840"/>
<dbReference type="KEGG" id="xfn:XfasM23_0136"/>
<dbReference type="HOGENOM" id="CLU_007884_10_2_6"/>
<dbReference type="Proteomes" id="UP000001698">
    <property type="component" value="Chromosome"/>
</dbReference>
<dbReference type="GO" id="GO:0005829">
    <property type="term" value="C:cytosol"/>
    <property type="evidence" value="ECO:0007669"/>
    <property type="project" value="TreeGrafter"/>
</dbReference>
<dbReference type="GO" id="GO:0005960">
    <property type="term" value="C:glycine cleavage complex"/>
    <property type="evidence" value="ECO:0007669"/>
    <property type="project" value="InterPro"/>
</dbReference>
<dbReference type="GO" id="GO:0004047">
    <property type="term" value="F:aminomethyltransferase activity"/>
    <property type="evidence" value="ECO:0007669"/>
    <property type="project" value="UniProtKB-UniRule"/>
</dbReference>
<dbReference type="GO" id="GO:0008483">
    <property type="term" value="F:transaminase activity"/>
    <property type="evidence" value="ECO:0007669"/>
    <property type="project" value="UniProtKB-KW"/>
</dbReference>
<dbReference type="GO" id="GO:0019464">
    <property type="term" value="P:glycine decarboxylation via glycine cleavage system"/>
    <property type="evidence" value="ECO:0007669"/>
    <property type="project" value="UniProtKB-UniRule"/>
</dbReference>
<dbReference type="FunFam" id="2.40.30.110:FF:000001">
    <property type="entry name" value="Aminomethyltransferase"/>
    <property type="match status" value="1"/>
</dbReference>
<dbReference type="FunFam" id="3.30.70.1400:FF:000001">
    <property type="entry name" value="Aminomethyltransferase"/>
    <property type="match status" value="1"/>
</dbReference>
<dbReference type="FunFam" id="4.10.1250.10:FF:000001">
    <property type="entry name" value="Aminomethyltransferase"/>
    <property type="match status" value="1"/>
</dbReference>
<dbReference type="Gene3D" id="2.40.30.110">
    <property type="entry name" value="Aminomethyltransferase beta-barrel domains"/>
    <property type="match status" value="1"/>
</dbReference>
<dbReference type="Gene3D" id="3.30.70.1400">
    <property type="entry name" value="Aminomethyltransferase beta-barrel domains"/>
    <property type="match status" value="1"/>
</dbReference>
<dbReference type="Gene3D" id="4.10.1250.10">
    <property type="entry name" value="Aminomethyltransferase fragment"/>
    <property type="match status" value="1"/>
</dbReference>
<dbReference type="Gene3D" id="3.30.1360.120">
    <property type="entry name" value="Probable tRNA modification gtpase trme, domain 1"/>
    <property type="match status" value="1"/>
</dbReference>
<dbReference type="HAMAP" id="MF_00259">
    <property type="entry name" value="GcvT"/>
    <property type="match status" value="1"/>
</dbReference>
<dbReference type="InterPro" id="IPR006223">
    <property type="entry name" value="GCS_T"/>
</dbReference>
<dbReference type="InterPro" id="IPR022903">
    <property type="entry name" value="GCS_T_bac"/>
</dbReference>
<dbReference type="InterPro" id="IPR013977">
    <property type="entry name" value="GCST_C"/>
</dbReference>
<dbReference type="InterPro" id="IPR006222">
    <property type="entry name" value="GCV_T_N"/>
</dbReference>
<dbReference type="InterPro" id="IPR028896">
    <property type="entry name" value="GcvT/YgfZ/DmdA"/>
</dbReference>
<dbReference type="InterPro" id="IPR029043">
    <property type="entry name" value="GcvT/YgfZ_C"/>
</dbReference>
<dbReference type="InterPro" id="IPR027266">
    <property type="entry name" value="TrmE/GcvT_dom1"/>
</dbReference>
<dbReference type="NCBIfam" id="TIGR00528">
    <property type="entry name" value="gcvT"/>
    <property type="match status" value="1"/>
</dbReference>
<dbReference type="NCBIfam" id="NF001567">
    <property type="entry name" value="PRK00389.1"/>
    <property type="match status" value="1"/>
</dbReference>
<dbReference type="PANTHER" id="PTHR43757">
    <property type="entry name" value="AMINOMETHYLTRANSFERASE"/>
    <property type="match status" value="1"/>
</dbReference>
<dbReference type="PANTHER" id="PTHR43757:SF2">
    <property type="entry name" value="AMINOMETHYLTRANSFERASE, MITOCHONDRIAL"/>
    <property type="match status" value="1"/>
</dbReference>
<dbReference type="Pfam" id="PF01571">
    <property type="entry name" value="GCV_T"/>
    <property type="match status" value="1"/>
</dbReference>
<dbReference type="Pfam" id="PF08669">
    <property type="entry name" value="GCV_T_C"/>
    <property type="match status" value="1"/>
</dbReference>
<dbReference type="PIRSF" id="PIRSF006487">
    <property type="entry name" value="GcvT"/>
    <property type="match status" value="1"/>
</dbReference>
<dbReference type="SUPFAM" id="SSF101790">
    <property type="entry name" value="Aminomethyltransferase beta-barrel domain"/>
    <property type="match status" value="1"/>
</dbReference>
<dbReference type="SUPFAM" id="SSF103025">
    <property type="entry name" value="Folate-binding domain"/>
    <property type="match status" value="1"/>
</dbReference>
<reference key="1">
    <citation type="journal article" date="2010" name="J. Bacteriol.">
        <title>Whole genome sequences of two Xylella fastidiosa strains (M12 and M23) causing almond leaf scorch disease in California.</title>
        <authorList>
            <person name="Chen J."/>
            <person name="Xie G."/>
            <person name="Han S."/>
            <person name="Chertkov O."/>
            <person name="Sims D."/>
            <person name="Civerolo E.L."/>
        </authorList>
    </citation>
    <scope>NUCLEOTIDE SEQUENCE [LARGE SCALE GENOMIC DNA]</scope>
    <source>
        <strain>M23</strain>
    </source>
</reference>
<name>GCST_XYLF2</name>
<feature type="chain" id="PRO_1000114126" description="Aminomethyltransferase">
    <location>
        <begin position="1"/>
        <end position="368"/>
    </location>
</feature>
<proteinExistence type="inferred from homology"/>
<gene>
    <name evidence="1" type="primary">gcvT</name>
    <name type="ordered locus">XfasM23_0136</name>
</gene>
<sequence>MIKKTILNDTHQALGAKMVDFSGWEMPIHYGSQIDEHHHVRRNAGIFDVSHMTVIDLHGTQVRPLLRRLLANSVDKLKVPGKALYSCMLNPQGGVIDDLIVYYLREDYFRFIVNAATREKDLAWINTQASAFNVRVEERADLAMLAVQGPAARAQVTNLLAETHRDAVEKLGRFAALEVASHSKKPLFISRTGYTGEDGFEILLPQEETITLWNALLKTGVKPIGLGARDTLRLEAGMNLYGQDMDEQVSPYEAALGWTVMLDEGRNFIGRNVLEQQKTNGVSRQMIGLLMDEKGVLRHGQKVLTAQGEGHILSGTFSPTLNKAIGFARVPAGKPSEVRVNIRDREIPVRVVKFPFVREGQTQPNIFD</sequence>
<keyword id="KW-0032">Aminotransferase</keyword>
<keyword id="KW-0808">Transferase</keyword>